<proteinExistence type="inferred from homology"/>
<sequence length="614" mass="66585">MSKVIGIDLGTTNSCIAILEGDEPKVIQNPEGARTTPSVVAFKNDETQVGEVAKRQAITNPNTIQSIKRHMGTDYKVDVDGKSYTPQEISAMVLQNLKSTAEDYLGESVDKAVITVPAYFNDSERQATKDAGKIAGLEVERIINEPTAAALAYGLDKTEQDQKVLVFDLGGGTFDVSILELGDGVFEVLSTAGDNKLGGDDFDQVIIDHLVAEFKKENSVDLSKDKMALQRLKDAAEKAKKDLSGVSQTQISLPFISAGENGPLHLELTLTRSKFEELADSLIRRTMEPTRQAMKDAGLSSSDIDEVILVGGSTRIPAVQEAVKKEVGKDPHKGVNPDEVVAMGAAIQGGVITGDVKDVVLLDVTPLSLGIEIMGGRMNTLIERNTTIPTSKSQVYSTAADNQPAVDIHVLQGERPMAADNKTLGRFQLTDIPAAPRGVPQIEVTFDIDKNGIVNVTAKDLGTNKEQNITIQSSSALSDDEIDRMVKDAEENAEADKKRREESDLRNEADSLVFQVEKTITDLGENISEEDKQNAEDKKEALKSALEGEDIDDIKAKKEDLEKVVQDLSTKVYEQAAQAQQQAQGEDANASQDSNVEDADFKEVKDDDNQDNQK</sequence>
<comment type="function">
    <text evidence="1">Acts as a chaperone.</text>
</comment>
<comment type="induction">
    <text evidence="1">By stress conditions e.g. heat shock.</text>
</comment>
<comment type="similarity">
    <text evidence="1">Belongs to the heat shock protein 70 family.</text>
</comment>
<accession>Q49Y22</accession>
<feature type="chain" id="PRO_0000226013" description="Chaperone protein DnaK">
    <location>
        <begin position="1"/>
        <end position="614"/>
    </location>
</feature>
<feature type="region of interest" description="Disordered" evidence="2">
    <location>
        <begin position="490"/>
        <end position="510"/>
    </location>
</feature>
<feature type="region of interest" description="Disordered" evidence="2">
    <location>
        <begin position="524"/>
        <end position="555"/>
    </location>
</feature>
<feature type="region of interest" description="Disordered" evidence="2">
    <location>
        <begin position="575"/>
        <end position="614"/>
    </location>
</feature>
<feature type="compositionally biased region" description="Basic and acidic residues" evidence="2">
    <location>
        <begin position="490"/>
        <end position="509"/>
    </location>
</feature>
<feature type="compositionally biased region" description="Basic and acidic residues" evidence="2">
    <location>
        <begin position="529"/>
        <end position="542"/>
    </location>
</feature>
<feature type="compositionally biased region" description="Low complexity" evidence="2">
    <location>
        <begin position="575"/>
        <end position="584"/>
    </location>
</feature>
<feature type="compositionally biased region" description="Basic and acidic residues" evidence="2">
    <location>
        <begin position="599"/>
        <end position="614"/>
    </location>
</feature>
<feature type="modified residue" description="Phosphothreonine; by autocatalysis" evidence="1">
    <location>
        <position position="173"/>
    </location>
</feature>
<organism>
    <name type="scientific">Staphylococcus saprophyticus subsp. saprophyticus (strain ATCC 15305 / DSM 20229 / NCIMB 8711 / NCTC 7292 / S-41)</name>
    <dbReference type="NCBI Taxonomy" id="342451"/>
    <lineage>
        <taxon>Bacteria</taxon>
        <taxon>Bacillati</taxon>
        <taxon>Bacillota</taxon>
        <taxon>Bacilli</taxon>
        <taxon>Bacillales</taxon>
        <taxon>Staphylococcaceae</taxon>
        <taxon>Staphylococcus</taxon>
    </lineage>
</organism>
<evidence type="ECO:0000255" key="1">
    <source>
        <dbReference type="HAMAP-Rule" id="MF_00332"/>
    </source>
</evidence>
<evidence type="ECO:0000256" key="2">
    <source>
        <dbReference type="SAM" id="MobiDB-lite"/>
    </source>
</evidence>
<name>DNAK_STAS1</name>
<keyword id="KW-0067">ATP-binding</keyword>
<keyword id="KW-0143">Chaperone</keyword>
<keyword id="KW-0547">Nucleotide-binding</keyword>
<keyword id="KW-0597">Phosphoprotein</keyword>
<keyword id="KW-1185">Reference proteome</keyword>
<keyword id="KW-0346">Stress response</keyword>
<gene>
    <name evidence="1" type="primary">dnaK</name>
    <name type="ordered locus">SSP1177</name>
</gene>
<protein>
    <recommendedName>
        <fullName evidence="1">Chaperone protein DnaK</fullName>
    </recommendedName>
    <alternativeName>
        <fullName evidence="1">HSP70</fullName>
    </alternativeName>
    <alternativeName>
        <fullName evidence="1">Heat shock 70 kDa protein</fullName>
    </alternativeName>
    <alternativeName>
        <fullName evidence="1">Heat shock protein 70</fullName>
    </alternativeName>
</protein>
<dbReference type="EMBL" id="AP008934">
    <property type="protein sequence ID" value="BAE18322.1"/>
    <property type="molecule type" value="Genomic_DNA"/>
</dbReference>
<dbReference type="RefSeq" id="WP_002483153.1">
    <property type="nucleotide sequence ID" value="NZ_MTGA01000038.1"/>
</dbReference>
<dbReference type="SMR" id="Q49Y22"/>
<dbReference type="GeneID" id="66867406"/>
<dbReference type="KEGG" id="ssp:SSP1177"/>
<dbReference type="PATRIC" id="fig|342451.11.peg.1175"/>
<dbReference type="eggNOG" id="COG0443">
    <property type="taxonomic scope" value="Bacteria"/>
</dbReference>
<dbReference type="HOGENOM" id="CLU_005965_2_4_9"/>
<dbReference type="OrthoDB" id="9766019at2"/>
<dbReference type="Proteomes" id="UP000006371">
    <property type="component" value="Chromosome"/>
</dbReference>
<dbReference type="GO" id="GO:0005524">
    <property type="term" value="F:ATP binding"/>
    <property type="evidence" value="ECO:0007669"/>
    <property type="project" value="UniProtKB-UniRule"/>
</dbReference>
<dbReference type="GO" id="GO:0140662">
    <property type="term" value="F:ATP-dependent protein folding chaperone"/>
    <property type="evidence" value="ECO:0007669"/>
    <property type="project" value="InterPro"/>
</dbReference>
<dbReference type="GO" id="GO:0051082">
    <property type="term" value="F:unfolded protein binding"/>
    <property type="evidence" value="ECO:0007669"/>
    <property type="project" value="InterPro"/>
</dbReference>
<dbReference type="CDD" id="cd10234">
    <property type="entry name" value="ASKHA_NBD_HSP70_DnaK-like"/>
    <property type="match status" value="1"/>
</dbReference>
<dbReference type="FunFam" id="2.60.34.10:FF:000014">
    <property type="entry name" value="Chaperone protein DnaK HSP70"/>
    <property type="match status" value="1"/>
</dbReference>
<dbReference type="FunFam" id="1.20.1270.10:FF:000001">
    <property type="entry name" value="Molecular chaperone DnaK"/>
    <property type="match status" value="1"/>
</dbReference>
<dbReference type="FunFam" id="3.30.420.40:FF:000071">
    <property type="entry name" value="Molecular chaperone DnaK"/>
    <property type="match status" value="1"/>
</dbReference>
<dbReference type="FunFam" id="3.90.640.10:FF:000003">
    <property type="entry name" value="Molecular chaperone DnaK"/>
    <property type="match status" value="1"/>
</dbReference>
<dbReference type="Gene3D" id="1.20.1270.10">
    <property type="match status" value="1"/>
</dbReference>
<dbReference type="Gene3D" id="3.30.420.40">
    <property type="match status" value="2"/>
</dbReference>
<dbReference type="Gene3D" id="3.90.640.10">
    <property type="entry name" value="Actin, Chain A, domain 4"/>
    <property type="match status" value="1"/>
</dbReference>
<dbReference type="Gene3D" id="2.60.34.10">
    <property type="entry name" value="Substrate Binding Domain Of DNAk, Chain A, domain 1"/>
    <property type="match status" value="1"/>
</dbReference>
<dbReference type="HAMAP" id="MF_00332">
    <property type="entry name" value="DnaK"/>
    <property type="match status" value="1"/>
</dbReference>
<dbReference type="InterPro" id="IPR043129">
    <property type="entry name" value="ATPase_NBD"/>
</dbReference>
<dbReference type="InterPro" id="IPR012725">
    <property type="entry name" value="Chaperone_DnaK"/>
</dbReference>
<dbReference type="InterPro" id="IPR018181">
    <property type="entry name" value="Heat_shock_70_CS"/>
</dbReference>
<dbReference type="InterPro" id="IPR029048">
    <property type="entry name" value="HSP70_C_sf"/>
</dbReference>
<dbReference type="InterPro" id="IPR029047">
    <property type="entry name" value="HSP70_peptide-bd_sf"/>
</dbReference>
<dbReference type="InterPro" id="IPR013126">
    <property type="entry name" value="Hsp_70_fam"/>
</dbReference>
<dbReference type="NCBIfam" id="NF001413">
    <property type="entry name" value="PRK00290.1"/>
    <property type="match status" value="1"/>
</dbReference>
<dbReference type="NCBIfam" id="TIGR02350">
    <property type="entry name" value="prok_dnaK"/>
    <property type="match status" value="1"/>
</dbReference>
<dbReference type="PANTHER" id="PTHR19375">
    <property type="entry name" value="HEAT SHOCK PROTEIN 70KDA"/>
    <property type="match status" value="1"/>
</dbReference>
<dbReference type="Pfam" id="PF00012">
    <property type="entry name" value="HSP70"/>
    <property type="match status" value="1"/>
</dbReference>
<dbReference type="PRINTS" id="PR00301">
    <property type="entry name" value="HEATSHOCK70"/>
</dbReference>
<dbReference type="SUPFAM" id="SSF53067">
    <property type="entry name" value="Actin-like ATPase domain"/>
    <property type="match status" value="2"/>
</dbReference>
<dbReference type="SUPFAM" id="SSF100934">
    <property type="entry name" value="Heat shock protein 70kD (HSP70), C-terminal subdomain"/>
    <property type="match status" value="1"/>
</dbReference>
<dbReference type="SUPFAM" id="SSF100920">
    <property type="entry name" value="Heat shock protein 70kD (HSP70), peptide-binding domain"/>
    <property type="match status" value="1"/>
</dbReference>
<dbReference type="PROSITE" id="PS00297">
    <property type="entry name" value="HSP70_1"/>
    <property type="match status" value="1"/>
</dbReference>
<dbReference type="PROSITE" id="PS00329">
    <property type="entry name" value="HSP70_2"/>
    <property type="match status" value="1"/>
</dbReference>
<dbReference type="PROSITE" id="PS01036">
    <property type="entry name" value="HSP70_3"/>
    <property type="match status" value="1"/>
</dbReference>
<reference key="1">
    <citation type="journal article" date="2005" name="Proc. Natl. Acad. Sci. U.S.A.">
        <title>Whole genome sequence of Staphylococcus saprophyticus reveals the pathogenesis of uncomplicated urinary tract infection.</title>
        <authorList>
            <person name="Kuroda M."/>
            <person name="Yamashita A."/>
            <person name="Hirakawa H."/>
            <person name="Kumano M."/>
            <person name="Morikawa K."/>
            <person name="Higashide M."/>
            <person name="Maruyama A."/>
            <person name="Inose Y."/>
            <person name="Matoba K."/>
            <person name="Toh H."/>
            <person name="Kuhara S."/>
            <person name="Hattori M."/>
            <person name="Ohta T."/>
        </authorList>
    </citation>
    <scope>NUCLEOTIDE SEQUENCE [LARGE SCALE GENOMIC DNA]</scope>
    <source>
        <strain>ATCC 15305 / DSM 20229 / NCIMB 8711 / NCTC 7292 / S-41</strain>
    </source>
</reference>